<dbReference type="EC" id="3.1.26.3" evidence="1"/>
<dbReference type="EMBL" id="AF123492">
    <property type="protein sequence ID" value="AAD40229.1"/>
    <property type="molecule type" value="Genomic_DNA"/>
</dbReference>
<dbReference type="EMBL" id="AE004091">
    <property type="protein sequence ID" value="AAG04159.1"/>
    <property type="molecule type" value="Genomic_DNA"/>
</dbReference>
<dbReference type="PIR" id="E83548">
    <property type="entry name" value="E83548"/>
</dbReference>
<dbReference type="RefSeq" id="NP_249461.1">
    <property type="nucleotide sequence ID" value="NC_002516.2"/>
</dbReference>
<dbReference type="RefSeq" id="WP_003085565.1">
    <property type="nucleotide sequence ID" value="NZ_QZGE01000007.1"/>
</dbReference>
<dbReference type="SMR" id="Q9XCX9"/>
<dbReference type="FunCoup" id="Q9XCX9">
    <property type="interactions" value="523"/>
</dbReference>
<dbReference type="STRING" id="208964.PA0770"/>
<dbReference type="PaxDb" id="208964-PA0770"/>
<dbReference type="DNASU" id="882139"/>
<dbReference type="GeneID" id="882139"/>
<dbReference type="KEGG" id="pae:PA0770"/>
<dbReference type="PATRIC" id="fig|208964.12.peg.800"/>
<dbReference type="PseudoCAP" id="PA0770"/>
<dbReference type="HOGENOM" id="CLU_000907_1_1_6"/>
<dbReference type="InParanoid" id="Q9XCX9"/>
<dbReference type="OrthoDB" id="9805026at2"/>
<dbReference type="PhylomeDB" id="Q9XCX9"/>
<dbReference type="BioCyc" id="PAER208964:G1FZ6-783-MONOMER"/>
<dbReference type="Proteomes" id="UP000002438">
    <property type="component" value="Chromosome"/>
</dbReference>
<dbReference type="GO" id="GO:0005829">
    <property type="term" value="C:cytosol"/>
    <property type="evidence" value="ECO:0000318"/>
    <property type="project" value="GO_Central"/>
</dbReference>
<dbReference type="GO" id="GO:0003725">
    <property type="term" value="F:double-stranded RNA binding"/>
    <property type="evidence" value="ECO:0000318"/>
    <property type="project" value="GO_Central"/>
</dbReference>
<dbReference type="GO" id="GO:0046872">
    <property type="term" value="F:metal ion binding"/>
    <property type="evidence" value="ECO:0007669"/>
    <property type="project" value="UniProtKB-KW"/>
</dbReference>
<dbReference type="GO" id="GO:0004525">
    <property type="term" value="F:ribonuclease III activity"/>
    <property type="evidence" value="ECO:0000318"/>
    <property type="project" value="GO_Central"/>
</dbReference>
<dbReference type="GO" id="GO:0019843">
    <property type="term" value="F:rRNA binding"/>
    <property type="evidence" value="ECO:0007669"/>
    <property type="project" value="UniProtKB-KW"/>
</dbReference>
<dbReference type="GO" id="GO:0006397">
    <property type="term" value="P:mRNA processing"/>
    <property type="evidence" value="ECO:0007669"/>
    <property type="project" value="UniProtKB-UniRule"/>
</dbReference>
<dbReference type="GO" id="GO:0010468">
    <property type="term" value="P:regulation of gene expression"/>
    <property type="evidence" value="ECO:0000318"/>
    <property type="project" value="GO_Central"/>
</dbReference>
<dbReference type="GO" id="GO:0006396">
    <property type="term" value="P:RNA processing"/>
    <property type="evidence" value="ECO:0000318"/>
    <property type="project" value="GO_Central"/>
</dbReference>
<dbReference type="GO" id="GO:0006364">
    <property type="term" value="P:rRNA processing"/>
    <property type="evidence" value="ECO:0007669"/>
    <property type="project" value="UniProtKB-UniRule"/>
</dbReference>
<dbReference type="GO" id="GO:0008033">
    <property type="term" value="P:tRNA processing"/>
    <property type="evidence" value="ECO:0007669"/>
    <property type="project" value="UniProtKB-KW"/>
</dbReference>
<dbReference type="CDD" id="cd10845">
    <property type="entry name" value="DSRM_RNAse_III_family"/>
    <property type="match status" value="1"/>
</dbReference>
<dbReference type="CDD" id="cd00593">
    <property type="entry name" value="RIBOc"/>
    <property type="match status" value="1"/>
</dbReference>
<dbReference type="FunFam" id="1.10.1520.10:FF:000001">
    <property type="entry name" value="Ribonuclease 3"/>
    <property type="match status" value="1"/>
</dbReference>
<dbReference type="FunFam" id="3.30.160.20:FF:000077">
    <property type="entry name" value="Ribonuclease 3"/>
    <property type="match status" value="1"/>
</dbReference>
<dbReference type="Gene3D" id="3.30.160.20">
    <property type="match status" value="1"/>
</dbReference>
<dbReference type="Gene3D" id="1.10.1520.10">
    <property type="entry name" value="Ribonuclease III domain"/>
    <property type="match status" value="1"/>
</dbReference>
<dbReference type="HAMAP" id="MF_00104">
    <property type="entry name" value="RNase_III"/>
    <property type="match status" value="1"/>
</dbReference>
<dbReference type="InterPro" id="IPR014720">
    <property type="entry name" value="dsRBD_dom"/>
</dbReference>
<dbReference type="InterPro" id="IPR011907">
    <property type="entry name" value="RNase_III"/>
</dbReference>
<dbReference type="InterPro" id="IPR000999">
    <property type="entry name" value="RNase_III_dom"/>
</dbReference>
<dbReference type="InterPro" id="IPR036389">
    <property type="entry name" value="RNase_III_sf"/>
</dbReference>
<dbReference type="NCBIfam" id="TIGR02191">
    <property type="entry name" value="RNaseIII"/>
    <property type="match status" value="1"/>
</dbReference>
<dbReference type="PANTHER" id="PTHR11207:SF0">
    <property type="entry name" value="RIBONUCLEASE 3"/>
    <property type="match status" value="1"/>
</dbReference>
<dbReference type="PANTHER" id="PTHR11207">
    <property type="entry name" value="RIBONUCLEASE III"/>
    <property type="match status" value="1"/>
</dbReference>
<dbReference type="Pfam" id="PF00035">
    <property type="entry name" value="dsrm"/>
    <property type="match status" value="1"/>
</dbReference>
<dbReference type="Pfam" id="PF14622">
    <property type="entry name" value="Ribonucleas_3_3"/>
    <property type="match status" value="1"/>
</dbReference>
<dbReference type="SMART" id="SM00358">
    <property type="entry name" value="DSRM"/>
    <property type="match status" value="1"/>
</dbReference>
<dbReference type="SMART" id="SM00535">
    <property type="entry name" value="RIBOc"/>
    <property type="match status" value="1"/>
</dbReference>
<dbReference type="SUPFAM" id="SSF54768">
    <property type="entry name" value="dsRNA-binding domain-like"/>
    <property type="match status" value="1"/>
</dbReference>
<dbReference type="SUPFAM" id="SSF69065">
    <property type="entry name" value="RNase III domain-like"/>
    <property type="match status" value="1"/>
</dbReference>
<dbReference type="PROSITE" id="PS50137">
    <property type="entry name" value="DS_RBD"/>
    <property type="match status" value="1"/>
</dbReference>
<dbReference type="PROSITE" id="PS00517">
    <property type="entry name" value="RNASE_3_1"/>
    <property type="match status" value="1"/>
</dbReference>
<dbReference type="PROSITE" id="PS50142">
    <property type="entry name" value="RNASE_3_2"/>
    <property type="match status" value="1"/>
</dbReference>
<proteinExistence type="inferred from homology"/>
<gene>
    <name evidence="1" type="primary">rnc</name>
    <name type="ordered locus">PA0770</name>
</gene>
<organism>
    <name type="scientific">Pseudomonas aeruginosa (strain ATCC 15692 / DSM 22644 / CIP 104116 / JCM 14847 / LMG 12228 / 1C / PRS 101 / PAO1)</name>
    <dbReference type="NCBI Taxonomy" id="208964"/>
    <lineage>
        <taxon>Bacteria</taxon>
        <taxon>Pseudomonadati</taxon>
        <taxon>Pseudomonadota</taxon>
        <taxon>Gammaproteobacteria</taxon>
        <taxon>Pseudomonadales</taxon>
        <taxon>Pseudomonadaceae</taxon>
        <taxon>Pseudomonas</taxon>
    </lineage>
</organism>
<evidence type="ECO:0000255" key="1">
    <source>
        <dbReference type="HAMAP-Rule" id="MF_00104"/>
    </source>
</evidence>
<comment type="function">
    <text evidence="1">Digests double-stranded RNA. Involved in the processing of primary rRNA transcript to yield the immediate precursors to the large and small rRNAs (23S and 16S). Processes some mRNAs, and tRNAs when they are encoded in the rRNA operon. Processes pre-crRNA and tracrRNA of type II CRISPR loci if present in the organism.</text>
</comment>
<comment type="catalytic activity">
    <reaction evidence="1">
        <text>Endonucleolytic cleavage to 5'-phosphomonoester.</text>
        <dbReference type="EC" id="3.1.26.3"/>
    </reaction>
</comment>
<comment type="cofactor">
    <cofactor evidence="1">
        <name>Mg(2+)</name>
        <dbReference type="ChEBI" id="CHEBI:18420"/>
    </cofactor>
</comment>
<comment type="subunit">
    <text evidence="1">Homodimer.</text>
</comment>
<comment type="subcellular location">
    <subcellularLocation>
        <location evidence="1">Cytoplasm</location>
    </subcellularLocation>
</comment>
<comment type="similarity">
    <text evidence="1">Belongs to the ribonuclease III family.</text>
</comment>
<name>RNC_PSEAE</name>
<accession>Q9XCX9</accession>
<sequence>MSNSLDRLERKLGYTFKDRDLMVLALTHRSYAGRNNERLEFLGDAILNFVIGEALFHHFPQAREGQLSRLRARLVKGETLALLARGFEVGDYLRLGSGELKSGGFRRESILADAMEALIGAIYLDTGMDSARERIIAWLGPQLRELTPVDTNKDPKTRLQEFLQSRGCDLPRYEVVDIQGEPHCRTFFVDCEVALLSDKTHGHGGSRRIAEQVAAAAALVALGVENGHD</sequence>
<reference key="1">
    <citation type="journal article" date="1999" name="J. Bacteriol.">
        <title>Cloning and analysis of the rnc-era-recO operon from Pseudomonas aeruginosa.</title>
        <authorList>
            <person name="Powell B.S."/>
            <person name="Peters H.K. III"/>
            <person name="Nakamura Y."/>
            <person name="Court D.L."/>
        </authorList>
    </citation>
    <scope>NUCLEOTIDE SEQUENCE [GENOMIC DNA]</scope>
    <source>
        <strain>PAK</strain>
    </source>
</reference>
<reference key="2">
    <citation type="journal article" date="2000" name="Nature">
        <title>Complete genome sequence of Pseudomonas aeruginosa PAO1, an opportunistic pathogen.</title>
        <authorList>
            <person name="Stover C.K."/>
            <person name="Pham X.-Q.T."/>
            <person name="Erwin A.L."/>
            <person name="Mizoguchi S.D."/>
            <person name="Warrener P."/>
            <person name="Hickey M.J."/>
            <person name="Brinkman F.S.L."/>
            <person name="Hufnagle W.O."/>
            <person name="Kowalik D.J."/>
            <person name="Lagrou M."/>
            <person name="Garber R.L."/>
            <person name="Goltry L."/>
            <person name="Tolentino E."/>
            <person name="Westbrock-Wadman S."/>
            <person name="Yuan Y."/>
            <person name="Brody L.L."/>
            <person name="Coulter S.N."/>
            <person name="Folger K.R."/>
            <person name="Kas A."/>
            <person name="Larbig K."/>
            <person name="Lim R.M."/>
            <person name="Smith K.A."/>
            <person name="Spencer D.H."/>
            <person name="Wong G.K.-S."/>
            <person name="Wu Z."/>
            <person name="Paulsen I.T."/>
            <person name="Reizer J."/>
            <person name="Saier M.H. Jr."/>
            <person name="Hancock R.E.W."/>
            <person name="Lory S."/>
            <person name="Olson M.V."/>
        </authorList>
    </citation>
    <scope>NUCLEOTIDE SEQUENCE [LARGE SCALE GENOMIC DNA]</scope>
    <source>
        <strain>ATCC 15692 / DSM 22644 / CIP 104116 / JCM 14847 / LMG 12228 / 1C / PRS 101 / PAO1</strain>
    </source>
</reference>
<feature type="chain" id="PRO_0000180419" description="Ribonuclease 3">
    <location>
        <begin position="1"/>
        <end position="229"/>
    </location>
</feature>
<feature type="domain" description="RNase III" evidence="1">
    <location>
        <begin position="5"/>
        <end position="127"/>
    </location>
</feature>
<feature type="domain" description="DRBM" evidence="1">
    <location>
        <begin position="154"/>
        <end position="224"/>
    </location>
</feature>
<feature type="active site" evidence="1">
    <location>
        <position position="44"/>
    </location>
</feature>
<feature type="active site" evidence="1">
    <location>
        <position position="116"/>
    </location>
</feature>
<feature type="binding site" evidence="1">
    <location>
        <position position="40"/>
    </location>
    <ligand>
        <name>Mg(2+)</name>
        <dbReference type="ChEBI" id="CHEBI:18420"/>
    </ligand>
</feature>
<feature type="binding site" evidence="1">
    <location>
        <position position="113"/>
    </location>
    <ligand>
        <name>Mg(2+)</name>
        <dbReference type="ChEBI" id="CHEBI:18420"/>
    </ligand>
</feature>
<feature type="binding site" evidence="1">
    <location>
        <position position="116"/>
    </location>
    <ligand>
        <name>Mg(2+)</name>
        <dbReference type="ChEBI" id="CHEBI:18420"/>
    </ligand>
</feature>
<keyword id="KW-0963">Cytoplasm</keyword>
<keyword id="KW-0255">Endonuclease</keyword>
<keyword id="KW-0378">Hydrolase</keyword>
<keyword id="KW-0460">Magnesium</keyword>
<keyword id="KW-0479">Metal-binding</keyword>
<keyword id="KW-0507">mRNA processing</keyword>
<keyword id="KW-0540">Nuclease</keyword>
<keyword id="KW-1185">Reference proteome</keyword>
<keyword id="KW-0694">RNA-binding</keyword>
<keyword id="KW-0698">rRNA processing</keyword>
<keyword id="KW-0699">rRNA-binding</keyword>
<keyword id="KW-0819">tRNA processing</keyword>
<protein>
    <recommendedName>
        <fullName evidence="1">Ribonuclease 3</fullName>
        <ecNumber evidence="1">3.1.26.3</ecNumber>
    </recommendedName>
    <alternativeName>
        <fullName evidence="1">Ribonuclease III</fullName>
        <shortName evidence="1">RNase III</shortName>
    </alternativeName>
</protein>